<proteinExistence type="inferred from homology"/>
<keyword id="KW-0150">Chloroplast</keyword>
<keyword id="KW-0507">mRNA processing</keyword>
<keyword id="KW-0934">Plastid</keyword>
<keyword id="KW-0694">RNA-binding</keyword>
<keyword id="KW-0819">tRNA processing</keyword>
<evidence type="ECO:0000255" key="1">
    <source>
        <dbReference type="HAMAP-Rule" id="MF_01390"/>
    </source>
</evidence>
<sequence length="511" mass="60723">MEEFKGYLEKSRSKQQHFLYPFLFQEYIYALAHDHGLNVNGSIFYEPAEISGYDNKFSSLLVKRLITRMYQQNYLINSVNDSNQNRFVGHNKNFYSQMISEGFAAIVEIPFSLRLASSLEEKKEIPKSQNLRSIHSIFPFFEDKLSHLNYVSDILIPYPVHLEILVQILQCWIQDVPSLHLLRFFFHEYHNWNNLITQKKSSYGFSKENPRLFWFLYNSYVVECESILVFLRKQSSYLRSTSSGPFLERTHFYEKIGQHLIVLCCNDFQKTLWLFKDPFMHYVRYQGKSILASKRTHLLMKKWKSYFVNFWQCHFHFWSQPCRIHINQFSNFSFYFLGYLSNVPINPSAVKSQMLENSFLIDTVTKKFETIVPIIPMIGSLSKAKFCNVSGNPISKPVWADLSDSDIIDRFGRICRNLSHYYSGSSKKQSLYRIKYILRLSCARTLARKHKSTVRAFLQRLGSEFLEEFFTEEEKVLSLILPRISYPLHKLYRERIWYLDIIRINDLVNHL</sequence>
<organism>
    <name type="scientific">Anchomanes difformis</name>
    <name type="common">Amorphophallus difformis</name>
    <dbReference type="NCBI Taxonomy" id="28473"/>
    <lineage>
        <taxon>Eukaryota</taxon>
        <taxon>Viridiplantae</taxon>
        <taxon>Streptophyta</taxon>
        <taxon>Embryophyta</taxon>
        <taxon>Tracheophyta</taxon>
        <taxon>Spermatophyta</taxon>
        <taxon>Magnoliopsida</taxon>
        <taxon>Liliopsida</taxon>
        <taxon>Araceae</taxon>
        <taxon>Philodendroideae</taxon>
        <taxon>Aglaonemateae</taxon>
        <taxon>Anchomanes</taxon>
    </lineage>
</organism>
<accession>Q8MEC9</accession>
<feature type="chain" id="PRO_0000143233" description="Maturase K">
    <location>
        <begin position="1"/>
        <end position="511"/>
    </location>
</feature>
<comment type="function">
    <text evidence="1">Usually encoded in the trnK tRNA gene intron. Probably assists in splicing its own and other chloroplast group II introns.</text>
</comment>
<comment type="subcellular location">
    <subcellularLocation>
        <location>Plastid</location>
        <location>Chloroplast</location>
    </subcellularLocation>
</comment>
<comment type="similarity">
    <text evidence="1">Belongs to the intron maturase 2 family. MatK subfamily.</text>
</comment>
<reference key="1">
    <citation type="journal article" date="2002" name="Syst. Bot.">
        <title>Phylogeny of the tribe Thomsonieae (Araceae) based on chloroplast matK and trnL intron sequences.</title>
        <authorList>
            <person name="Grob G.B.J."/>
            <person name="Gravendeel B."/>
            <person name="Eurlings M.C.M."/>
            <person name="Hetterscheid W.L.A."/>
        </authorList>
        <dbReference type="AGRICOLA" id="IND23294517"/>
    </citation>
    <scope>NUCLEOTIDE SEQUENCE [GENOMIC DNA]</scope>
</reference>
<name>MATK_ANCDI</name>
<gene>
    <name evidence="1" type="primary">matK</name>
</gene>
<dbReference type="EMBL" id="AF387427">
    <property type="protein sequence ID" value="AAM46602.1"/>
    <property type="molecule type" value="Genomic_DNA"/>
</dbReference>
<dbReference type="GO" id="GO:0009507">
    <property type="term" value="C:chloroplast"/>
    <property type="evidence" value="ECO:0007669"/>
    <property type="project" value="UniProtKB-SubCell"/>
</dbReference>
<dbReference type="GO" id="GO:0003723">
    <property type="term" value="F:RNA binding"/>
    <property type="evidence" value="ECO:0007669"/>
    <property type="project" value="UniProtKB-KW"/>
</dbReference>
<dbReference type="GO" id="GO:0006397">
    <property type="term" value="P:mRNA processing"/>
    <property type="evidence" value="ECO:0007669"/>
    <property type="project" value="UniProtKB-KW"/>
</dbReference>
<dbReference type="GO" id="GO:0008380">
    <property type="term" value="P:RNA splicing"/>
    <property type="evidence" value="ECO:0007669"/>
    <property type="project" value="UniProtKB-UniRule"/>
</dbReference>
<dbReference type="GO" id="GO:0008033">
    <property type="term" value="P:tRNA processing"/>
    <property type="evidence" value="ECO:0007669"/>
    <property type="project" value="UniProtKB-KW"/>
</dbReference>
<dbReference type="HAMAP" id="MF_01390">
    <property type="entry name" value="MatK"/>
    <property type="match status" value="1"/>
</dbReference>
<dbReference type="InterPro" id="IPR024937">
    <property type="entry name" value="Domain_X"/>
</dbReference>
<dbReference type="InterPro" id="IPR002866">
    <property type="entry name" value="Maturase_MatK"/>
</dbReference>
<dbReference type="InterPro" id="IPR024942">
    <property type="entry name" value="Maturase_MatK_N"/>
</dbReference>
<dbReference type="PANTHER" id="PTHR34811">
    <property type="entry name" value="MATURASE K"/>
    <property type="match status" value="1"/>
</dbReference>
<dbReference type="PANTHER" id="PTHR34811:SF1">
    <property type="entry name" value="MATURASE K"/>
    <property type="match status" value="1"/>
</dbReference>
<dbReference type="Pfam" id="PF01348">
    <property type="entry name" value="Intron_maturas2"/>
    <property type="match status" value="1"/>
</dbReference>
<dbReference type="Pfam" id="PF01824">
    <property type="entry name" value="MatK_N"/>
    <property type="match status" value="1"/>
</dbReference>
<geneLocation type="chloroplast"/>
<protein>
    <recommendedName>
        <fullName evidence="1">Maturase K</fullName>
    </recommendedName>
    <alternativeName>
        <fullName evidence="1">Intron maturase</fullName>
    </alternativeName>
</protein>